<reference key="1">
    <citation type="journal article" date="1998" name="DNA Res.">
        <title>Structural analysis of Arabidopsis thaliana chromosome 5. VII. Sequence features of the regions of 1,013,767 bp covered by sixteen physically assigned P1 and TAC clones.</title>
        <authorList>
            <person name="Nakamura Y."/>
            <person name="Sato S."/>
            <person name="Asamizu E."/>
            <person name="Kaneko T."/>
            <person name="Kotani H."/>
            <person name="Miyajima N."/>
            <person name="Tabata S."/>
        </authorList>
    </citation>
    <scope>NUCLEOTIDE SEQUENCE [LARGE SCALE GENOMIC DNA]</scope>
    <source>
        <strain>cv. Columbia</strain>
    </source>
</reference>
<reference key="2">
    <citation type="journal article" date="2017" name="Plant J.">
        <title>Araport11: a complete reannotation of the Arabidopsis thaliana reference genome.</title>
        <authorList>
            <person name="Cheng C.Y."/>
            <person name="Krishnakumar V."/>
            <person name="Chan A.P."/>
            <person name="Thibaud-Nissen F."/>
            <person name="Schobel S."/>
            <person name="Town C.D."/>
        </authorList>
    </citation>
    <scope>GENOME REANNOTATION</scope>
    <source>
        <strain>cv. Columbia</strain>
    </source>
</reference>
<reference key="3">
    <citation type="journal article" date="2002" name="Science">
        <title>Functional annotation of a full-length Arabidopsis cDNA collection.</title>
        <authorList>
            <person name="Seki M."/>
            <person name="Narusaka M."/>
            <person name="Kamiya A."/>
            <person name="Ishida J."/>
            <person name="Satou M."/>
            <person name="Sakurai T."/>
            <person name="Nakajima M."/>
            <person name="Enju A."/>
            <person name="Akiyama K."/>
            <person name="Oono Y."/>
            <person name="Muramatsu M."/>
            <person name="Hayashizaki Y."/>
            <person name="Kawai J."/>
            <person name="Carninci P."/>
            <person name="Itoh M."/>
            <person name="Ishii Y."/>
            <person name="Arakawa T."/>
            <person name="Shibata K."/>
            <person name="Shinagawa A."/>
            <person name="Shinozaki K."/>
        </authorList>
    </citation>
    <scope>NUCLEOTIDE SEQUENCE [LARGE SCALE MRNA]</scope>
    <source>
        <strain>cv. Columbia</strain>
    </source>
</reference>
<reference key="4">
    <citation type="journal article" date="2003" name="Science">
        <title>Empirical analysis of transcriptional activity in the Arabidopsis genome.</title>
        <authorList>
            <person name="Yamada K."/>
            <person name="Lim J."/>
            <person name="Dale J.M."/>
            <person name="Chen H."/>
            <person name="Shinn P."/>
            <person name="Palm C.J."/>
            <person name="Southwick A.M."/>
            <person name="Wu H.C."/>
            <person name="Kim C.J."/>
            <person name="Nguyen M."/>
            <person name="Pham P.K."/>
            <person name="Cheuk R.F."/>
            <person name="Karlin-Newmann G."/>
            <person name="Liu S.X."/>
            <person name="Lam B."/>
            <person name="Sakano H."/>
            <person name="Wu T."/>
            <person name="Yu G."/>
            <person name="Miranda M."/>
            <person name="Quach H.L."/>
            <person name="Tripp M."/>
            <person name="Chang C.H."/>
            <person name="Lee J.M."/>
            <person name="Toriumi M.J."/>
            <person name="Chan M.M."/>
            <person name="Tang C.C."/>
            <person name="Onodera C.S."/>
            <person name="Deng J.M."/>
            <person name="Akiyama K."/>
            <person name="Ansari Y."/>
            <person name="Arakawa T."/>
            <person name="Banh J."/>
            <person name="Banno F."/>
            <person name="Bowser L."/>
            <person name="Brooks S.Y."/>
            <person name="Carninci P."/>
            <person name="Chao Q."/>
            <person name="Choy N."/>
            <person name="Enju A."/>
            <person name="Goldsmith A.D."/>
            <person name="Gurjal M."/>
            <person name="Hansen N.F."/>
            <person name="Hayashizaki Y."/>
            <person name="Johnson-Hopson C."/>
            <person name="Hsuan V.W."/>
            <person name="Iida K."/>
            <person name="Karnes M."/>
            <person name="Khan S."/>
            <person name="Koesema E."/>
            <person name="Ishida J."/>
            <person name="Jiang P.X."/>
            <person name="Jones T."/>
            <person name="Kawai J."/>
            <person name="Kamiya A."/>
            <person name="Meyers C."/>
            <person name="Nakajima M."/>
            <person name="Narusaka M."/>
            <person name="Seki M."/>
            <person name="Sakurai T."/>
            <person name="Satou M."/>
            <person name="Tamse R."/>
            <person name="Vaysberg M."/>
            <person name="Wallender E.K."/>
            <person name="Wong C."/>
            <person name="Yamamura Y."/>
            <person name="Yuan S."/>
            <person name="Shinozaki K."/>
            <person name="Davis R.W."/>
            <person name="Theologis A."/>
            <person name="Ecker J.R."/>
        </authorList>
    </citation>
    <scope>NUCLEOTIDE SEQUENCE [LARGE SCALE MRNA]</scope>
    <source>
        <strain>cv. Columbia</strain>
    </source>
</reference>
<reference key="5">
    <citation type="journal article" date="2002" name="Plant Mol. Biol.">
        <title>Auxin-responsive gene expression: genes, promoters and regulatory factors.</title>
        <authorList>
            <person name="Hagen G."/>
            <person name="Guilfoyle T.J."/>
        </authorList>
    </citation>
    <scope>GENE FAMILY</scope>
    <scope>NOMENCLATURE</scope>
</reference>
<reference key="6">
    <citation type="journal article" date="2012" name="Plant J.">
        <title>The SAUR19 subfamily of SMALL AUXIN UP RNA genes promote cell expansion.</title>
        <authorList>
            <person name="Spartz A.K."/>
            <person name="Lee S.H."/>
            <person name="Wenger J.P."/>
            <person name="Gonzalez N."/>
            <person name="Itoh H."/>
            <person name="Inze D."/>
            <person name="Peer W.A."/>
            <person name="Murphy A.S."/>
            <person name="Overvoorde P.J."/>
            <person name="Gray W.M."/>
        </authorList>
    </citation>
    <scope>INDUCTION BY AUXIN</scope>
</reference>
<reference key="7">
    <citation type="journal article" date="2017" name="Plant Physiol.">
        <title>Constitutive expression of Arabidopsis SMALL AUXIN UP RNA19 (SAUR19) in tomato confers auxin-independent hypocotyl elongation.</title>
        <authorList>
            <person name="Spartz A.K."/>
            <person name="Lor V.S."/>
            <person name="Ren H."/>
            <person name="Olszewski N.E."/>
            <person name="Miller N.D."/>
            <person name="Wu G."/>
            <person name="Spalding E.P."/>
            <person name="Gray W.M."/>
        </authorList>
    </citation>
    <scope>INDUCTION BY AUXIN</scope>
</reference>
<dbReference type="EMBL" id="AB015473">
    <property type="protein sequence ID" value="BAB08402.1"/>
    <property type="molecule type" value="Genomic_DNA"/>
</dbReference>
<dbReference type="EMBL" id="CP002688">
    <property type="protein sequence ID" value="AED92497.1"/>
    <property type="molecule type" value="Genomic_DNA"/>
</dbReference>
<dbReference type="EMBL" id="AK119083">
    <property type="protein sequence ID" value="BAC43659.1"/>
    <property type="molecule type" value="mRNA"/>
</dbReference>
<dbReference type="EMBL" id="BT004687">
    <property type="protein sequence ID" value="AAO42933.1"/>
    <property type="molecule type" value="mRNA"/>
</dbReference>
<dbReference type="RefSeq" id="NP_197304.1">
    <property type="nucleotide sequence ID" value="NM_121808.5"/>
</dbReference>
<dbReference type="SMR" id="Q9FJF9"/>
<dbReference type="FunCoup" id="Q9FJF9">
    <property type="interactions" value="302"/>
</dbReference>
<dbReference type="IntAct" id="Q9FJF9">
    <property type="interactions" value="1"/>
</dbReference>
<dbReference type="STRING" id="3702.Q9FJF9"/>
<dbReference type="PaxDb" id="3702-AT5G18030.1"/>
<dbReference type="EnsemblPlants" id="AT5G18030.1">
    <property type="protein sequence ID" value="AT5G18030.1"/>
    <property type="gene ID" value="AT5G18030"/>
</dbReference>
<dbReference type="GeneID" id="831670"/>
<dbReference type="Gramene" id="AT5G18030.1">
    <property type="protein sequence ID" value="AT5G18030.1"/>
    <property type="gene ID" value="AT5G18030"/>
</dbReference>
<dbReference type="KEGG" id="ath:AT5G18030"/>
<dbReference type="Araport" id="AT5G18030"/>
<dbReference type="TAIR" id="AT5G18030">
    <property type="gene designation" value="SAUR21"/>
</dbReference>
<dbReference type="eggNOG" id="ENOG502STBD">
    <property type="taxonomic scope" value="Eukaryota"/>
</dbReference>
<dbReference type="HOGENOM" id="CLU_098106_3_0_1"/>
<dbReference type="InParanoid" id="Q9FJF9"/>
<dbReference type="OMA" id="MVIPRGH"/>
<dbReference type="OrthoDB" id="625231at2759"/>
<dbReference type="PhylomeDB" id="Q9FJF9"/>
<dbReference type="PRO" id="PR:Q9FJF9"/>
<dbReference type="Proteomes" id="UP000006548">
    <property type="component" value="Chromosome 5"/>
</dbReference>
<dbReference type="ExpressionAtlas" id="Q9FJF9">
    <property type="expression patterns" value="baseline and differential"/>
</dbReference>
<dbReference type="GO" id="GO:0005886">
    <property type="term" value="C:plasma membrane"/>
    <property type="evidence" value="ECO:0007669"/>
    <property type="project" value="UniProtKB-SubCell"/>
</dbReference>
<dbReference type="GO" id="GO:0009734">
    <property type="term" value="P:auxin-activated signaling pathway"/>
    <property type="evidence" value="ECO:0007669"/>
    <property type="project" value="UniProtKB-KW"/>
</dbReference>
<dbReference type="GO" id="GO:0009733">
    <property type="term" value="P:response to auxin"/>
    <property type="evidence" value="ECO:0000270"/>
    <property type="project" value="UniProtKB"/>
</dbReference>
<dbReference type="InterPro" id="IPR003676">
    <property type="entry name" value="SAUR_fam"/>
</dbReference>
<dbReference type="PANTHER" id="PTHR31929">
    <property type="entry name" value="SAUR-LIKE AUXIN-RESPONSIVE PROTEIN FAMILY-RELATED"/>
    <property type="match status" value="1"/>
</dbReference>
<dbReference type="Pfam" id="PF02519">
    <property type="entry name" value="Auxin_inducible"/>
    <property type="match status" value="1"/>
</dbReference>
<keyword id="KW-0927">Auxin signaling pathway</keyword>
<keyword id="KW-1003">Cell membrane</keyword>
<keyword id="KW-0217">Developmental protein</keyword>
<keyword id="KW-0341">Growth regulation</keyword>
<keyword id="KW-0472">Membrane</keyword>
<keyword id="KW-1185">Reference proteome</keyword>
<feature type="chain" id="PRO_0000433063" description="Auxin-responsive protein SAUR21">
    <location>
        <begin position="1"/>
        <end position="88"/>
    </location>
</feature>
<protein>
    <recommendedName>
        <fullName evidence="5">Auxin-responsive protein SAUR21</fullName>
    </recommendedName>
    <alternativeName>
        <fullName evidence="4">Protein SMALL AUXIN UP RNA 21</fullName>
    </alternativeName>
</protein>
<sequence length="88" mass="9620">MALVRSLLGAKKILSRSTASAAPKGFLAVYVGESQKKRYLVPLSYLSQPSFQALLSKSEEEFGFDHPMGGLTIPCPEDTFINVTSRLQ</sequence>
<organism>
    <name type="scientific">Arabidopsis thaliana</name>
    <name type="common">Mouse-ear cress</name>
    <dbReference type="NCBI Taxonomy" id="3702"/>
    <lineage>
        <taxon>Eukaryota</taxon>
        <taxon>Viridiplantae</taxon>
        <taxon>Streptophyta</taxon>
        <taxon>Embryophyta</taxon>
        <taxon>Tracheophyta</taxon>
        <taxon>Spermatophyta</taxon>
        <taxon>Magnoliopsida</taxon>
        <taxon>eudicotyledons</taxon>
        <taxon>Gunneridae</taxon>
        <taxon>Pentapetalae</taxon>
        <taxon>rosids</taxon>
        <taxon>malvids</taxon>
        <taxon>Brassicales</taxon>
        <taxon>Brassicaceae</taxon>
        <taxon>Camelineae</taxon>
        <taxon>Arabidopsis</taxon>
    </lineage>
</organism>
<proteinExistence type="evidence at transcript level"/>
<comment type="function">
    <text evidence="1">Functions as a positive effector of cell expansion through modulation of auxin transport.</text>
</comment>
<comment type="subcellular location">
    <subcellularLocation>
        <location evidence="1">Cell membrane</location>
        <topology evidence="1">Peripheral membrane protein</topology>
    </subcellularLocation>
</comment>
<comment type="induction">
    <text evidence="2 3">Strongly induced by auxin.</text>
</comment>
<comment type="similarity">
    <text evidence="5">Belongs to the ARG7 family.</text>
</comment>
<gene>
    <name evidence="4" type="primary">SAUR21</name>
    <name evidence="6" type="ordered locus">At5g18030</name>
    <name evidence="7" type="ORF">MCM23.13</name>
</gene>
<accession>Q9FJF9</accession>
<evidence type="ECO:0000250" key="1">
    <source>
        <dbReference type="UniProtKB" id="Q9FJG1"/>
    </source>
</evidence>
<evidence type="ECO:0000269" key="2">
    <source>
    </source>
</evidence>
<evidence type="ECO:0000269" key="3">
    <source>
    </source>
</evidence>
<evidence type="ECO:0000303" key="4">
    <source>
    </source>
</evidence>
<evidence type="ECO:0000305" key="5"/>
<evidence type="ECO:0000312" key="6">
    <source>
        <dbReference type="Araport" id="AT5G18030"/>
    </source>
</evidence>
<evidence type="ECO:0000312" key="7">
    <source>
        <dbReference type="EMBL" id="BAB08402.1"/>
    </source>
</evidence>
<name>SAU21_ARATH</name>